<proteinExistence type="evidence at transcript level"/>
<feature type="chain" id="PRO_0000282880" description="Plakophilin-3">
    <location>
        <begin position="1"/>
        <end position="793"/>
    </location>
</feature>
<feature type="repeat" description="ARM 1">
    <location>
        <begin position="302"/>
        <end position="345"/>
    </location>
</feature>
<feature type="repeat" description="ARM 2">
    <location>
        <begin position="348"/>
        <end position="387"/>
    </location>
</feature>
<feature type="repeat" description="ARM 3">
    <location>
        <begin position="390"/>
        <end position="429"/>
    </location>
</feature>
<feature type="repeat" description="ARM 4">
    <location>
        <begin position="446"/>
        <end position="484"/>
    </location>
</feature>
<feature type="repeat" description="ARM 5">
    <location>
        <begin position="488"/>
        <end position="533"/>
    </location>
</feature>
<feature type="repeat" description="ARM 6">
    <location>
        <begin position="592"/>
        <end position="633"/>
    </location>
</feature>
<feature type="repeat" description="ARM 7">
    <location>
        <begin position="641"/>
        <end position="680"/>
    </location>
</feature>
<feature type="repeat" description="ARM 8">
    <location>
        <begin position="685"/>
        <end position="726"/>
    </location>
</feature>
<feature type="region of interest" description="Disordered" evidence="3">
    <location>
        <begin position="56"/>
        <end position="82"/>
    </location>
</feature>
<feature type="region of interest" description="Disordered" evidence="3">
    <location>
        <begin position="221"/>
        <end position="240"/>
    </location>
</feature>
<feature type="region of interest" description="Required for interaction with SFN" evidence="2">
    <location>
        <begin position="282"/>
        <end position="285"/>
    </location>
</feature>
<feature type="region of interest" description="Required for interaction with GSK3B" evidence="2">
    <location>
        <begin position="291"/>
        <end position="720"/>
    </location>
</feature>
<feature type="region of interest" description="Required for binding to PKP2 mRNA" evidence="2">
    <location>
        <begin position="513"/>
        <end position="793"/>
    </location>
</feature>
<feature type="compositionally biased region" description="Low complexity" evidence="3">
    <location>
        <begin position="66"/>
        <end position="82"/>
    </location>
</feature>
<feature type="site" description="Interacts with SFN" evidence="2">
    <location>
        <position position="282"/>
    </location>
</feature>
<feature type="modified residue" description="Omega-N-methylarginine" evidence="2">
    <location>
        <position position="81"/>
    </location>
</feature>
<feature type="modified residue" description="Phosphoserine" evidence="1">
    <location>
        <position position="122"/>
    </location>
</feature>
<feature type="modified residue" description="Phosphoserine" evidence="2">
    <location>
        <position position="179"/>
    </location>
</feature>
<feature type="modified residue" description="Phosphoserine" evidence="2">
    <location>
        <position position="182"/>
    </location>
</feature>
<feature type="modified residue" description="Phosphotyrosine" evidence="2">
    <location>
        <position position="194"/>
    </location>
</feature>
<feature type="modified residue" description="Phosphoserine" evidence="2">
    <location>
        <position position="239"/>
    </location>
</feature>
<feature type="modified residue" description="Phosphothreonine" evidence="2">
    <location>
        <position position="249"/>
    </location>
</feature>
<feature type="modified residue" description="Omega-N-methylarginine" evidence="2">
    <location>
        <position position="260"/>
    </location>
</feature>
<feature type="modified residue" description="Phosphoserine" evidence="2">
    <location>
        <position position="282"/>
    </location>
</feature>
<feature type="modified residue" description="Phosphoserine" evidence="2">
    <location>
        <position position="310"/>
    </location>
</feature>
<feature type="modified residue" description="Phosphoserine" evidence="2">
    <location>
        <position position="311"/>
    </location>
</feature>
<feature type="modified residue" description="Phosphoserine" evidence="2">
    <location>
        <position position="328"/>
    </location>
</feature>
<comment type="function">
    <text evidence="1 2">A component of desmosome cell-cell junctions which are required for positive regulation of cellular adhesion (By similarity). Required for the localization of DSG2, DSP and PKP2 to mature desmosome junctions (By similarity). May also play a role in the maintenance of DSG3 protein abundance in keratinocytes (By similarity). Required for the formation of DSP-containing desmosome precursors in the cytoplasm during desmosome assembly (By similarity). Also regulates the accumulation of CDH1 to mature desmosome junctions, via cAMP-dependent signaling and its interaction with activated RAP1A (By similarity). Positively regulates the stabilization of PKP2 mRNA and therefore protein abundance, via its interaction with FXR1, may also regulate the protein abundance of DSP via the same mechanism (By similarity). May also regulate the protein abundance of the desmosome component PKP1 (By similarity). Required for the organization of desmosome junctions at intercellular borders between basal keratinocytes of the epidermis, as a result plays a role in maintenance of the dermal barrier and regulation of the dermal inflammatory response (By similarity). Required during epidermal keratinocyte differentiation for cell adherence at tricellular cell-cell contacts, via regulation of the timely formation of adherens junctions and desmosomes in a calcium-dependent manner, and may also play a role in the organization of the intracellular actin fiber belt (By similarity). Acts as a negative regulator of the inflammatory response in hematopoietic cells of the skin and intestine, via modulation of proinflammatory cytokine production (By similarity). Important for epithelial barrier maintenance in the intestine to reduce intestinal permeability, thereby plays a role in protection from intestinal-derived endotoxemia (By similarity). Required for the development of hair follicles, via a role in the regulation of inner root sheaf length, correct alignment and anterior-posterior polarity of hair follicles (By similarity). Promotes proliferation and cell-cycle G1/S phase transition of keratinocytes (By similarity). Promotes E2F1-driven transcription of G1/S phase promoting genes by acting to release E2F1 from its inhibitory interaction with RB1, via sequestering RB1 and CDKN1A to the cytoplasm and thereby increasing CDK4- and CDK6-driven phosphorylation of RB1 (By similarity). May act as a scaffold protein to facilitate MAPK phosphorylation of RPS6KA protein family members and subsequently promote downstream EGFR signaling (By similarity). May play a role in the positive regulation of transcription of Wnt-mediated TCF-responsive target genes (By similarity).</text>
</comment>
<comment type="subunit">
    <text evidence="1 2">Found in a complex composed of CDH1, RAP1A and PKP3; PKP3 acts as a scaffold protein within the complex, the complex is required for CDH1 localization to mature desmosome cell junctions (By similarity). Interacts with FXR1; the interaction facilitates the binding of PKP3 to PKP2 mRNA (By similarity). Interacts (via ARM repeats) with GSK3B; the interaction may be involved in PKP3 protein degradation (By similarity). Interacts with hyperphosphorylated and hypophosphorylated RB1; the interaction inhibits RB1 interaction with and repression of the transcription factor E2F1, potentially via sequestering RB1 to the cytoplasm (By similarity). Interacts with CDKN1A; the interaction sequesters CDKN1A to the cytoplasm thereby repressing its role as an inhibitor of CDK4- and CDK6-driven RB1 phosphorylation (By similarity). Interacts (via N-terminus) with SFN; the interaction maintains the cytoplasmic pool of PKP3, facilitates PKP3 exchange at desmosomes and restricts PKP3 localization to existing desmosome cell junctions (By similarity). Interacts (via N-terminus) with SFN; the interaction maintains the cytoplasmic pool of PKP3 and restricts PKP3 localization to existing desmosome cell junctions (By similarity). Interacts (via N-terminus) with JUP; the interaction is required for PKP3 localization to desmosome cell-cell junctions (By similarity).</text>
</comment>
<comment type="subcellular location">
    <subcellularLocation>
        <location evidence="2">Nucleus</location>
    </subcellularLocation>
    <subcellularLocation>
        <location evidence="1">Cell junction</location>
        <location evidence="1">Desmosome</location>
    </subcellularLocation>
    <subcellularLocation>
        <location evidence="2">Cytoplasm</location>
    </subcellularLocation>
    <subcellularLocation>
        <location evidence="2">Cell membrane</location>
        <topology evidence="4">Peripheral membrane protein</topology>
    </subcellularLocation>
    <subcellularLocation>
        <location evidence="1">Cell junction</location>
        <location evidence="1">Adherens junction</location>
    </subcellularLocation>
    <text evidence="1 2">Translocates to the nucleus following canonical WNT signaling activation by WNT3A (By similarity). Maintains a cytoplasmic pool which can then be translocated to the desmosome, the cytoplasmic pool is maintained through PKP3 interaction with SFN (By similarity). Aberrant increases in translocation to the desmosome result in cell junction instability and therefore decreased cell adhesion (By similarity). Partially colocalizes at cell junctions in a zipper-like pattern with DSP, CDH1, CTNNB1 and CTNND1 in the early stages of keratinocyte differentiation (By similarity). Moves to cell junctions at tricellular contacts as differentiation progresses and as epithelial sheet formation completes (By similarity).</text>
</comment>
<comment type="PTM">
    <text evidence="2">Phosphorylated at Ser-282 when localized to the cytoplasm, PKP3 at desmosome cell junctions is not phosphorylated (By similarity). Phosphorylation at Try-194 by SRC is induced by reactive oxygen species and potentially acts as a release mechanism from desmosome cell-cell junctions (By similarity).</text>
</comment>
<comment type="similarity">
    <text evidence="4">Belongs to the beta-catenin family.</text>
</comment>
<protein>
    <recommendedName>
        <fullName>Plakophilin-3</fullName>
    </recommendedName>
</protein>
<organism>
    <name type="scientific">Bos taurus</name>
    <name type="common">Bovine</name>
    <dbReference type="NCBI Taxonomy" id="9913"/>
    <lineage>
        <taxon>Eukaryota</taxon>
        <taxon>Metazoa</taxon>
        <taxon>Chordata</taxon>
        <taxon>Craniata</taxon>
        <taxon>Vertebrata</taxon>
        <taxon>Euteleostomi</taxon>
        <taxon>Mammalia</taxon>
        <taxon>Eutheria</taxon>
        <taxon>Laurasiatheria</taxon>
        <taxon>Artiodactyla</taxon>
        <taxon>Ruminantia</taxon>
        <taxon>Pecora</taxon>
        <taxon>Bovidae</taxon>
        <taxon>Bovinae</taxon>
        <taxon>Bos</taxon>
    </lineage>
</organism>
<sequence length="793" mass="86529">MQDGNFLLSALQPEAGVCSLALPSDLQLDRRGAEGPEAERLRAARVQEQVRARLLQLGQQPRHNGPAEPDGAAEAARGASRAQYHTLQAGFSSRSQGLGGETSTFRPIAKPTYSPASWSSRSAVDLSSSRRLSSVHNGGGAFGAAGYRGAPPTAPVPARPVSFHERGGAGSRADYDTLSLRSLRLGAGGPDDRYSVVSEQLEPAATSSYRAFAYERRASSSSSRAGGLDWPEATEGPPSRTIRAPAMRTLQRFQSSHRSRGVAAGGPGGVLEPVTRAPSVRSLSLGDSGHLPDMRGLDSYGGHRTLQRLSSGFDDIDLPSAVKYLMASDPNLQVLGAAYIQHKCYSDAAAKKQARSLQAVPRLVKLFNHANQEVQRHATGAMRNLVYDNADNKLALVEENGIFELLRALREQDDELRKNVTGILWNLSSSDHLKDRLARDTLEQLTDLVLSPLSGAGGPPLIQQNASEAEIFYNATGFLRNLSSASQATRQKMRECHGLVDALVTYINHALDVGKCEDKSVENAVCVLRNLSYRLYDEMPPSALQRLEGRGRQDMGVPPGEAVGCFTPQSRRLRELPLTADALTFAEVSKDPKGLEWLWSPQIVGLYNRLLQRCELNRHTTEAAAGALQNITAGDRRWAGVLSRLALEQERILNPLLDRVRTADHHQLRSLTGLIRNLSRNARNKDEMSTKLVSHLIEKLPGSVGEKSPPADVLINIIAVLNNLVVASPVAARDLLYFDGLRKLVFIKKKRDSPDSEKSSRAASSLLANLWQYNKLHRDFRAKGYRKEDFLGP</sequence>
<name>PKP3_BOVIN</name>
<gene>
    <name type="primary">PKP3</name>
</gene>
<reference key="1">
    <citation type="submission" date="2006-09" db="EMBL/GenBank/DDBJ databases">
        <authorList>
            <consortium name="NIH - Mammalian Gene Collection (MGC) project"/>
        </authorList>
    </citation>
    <scope>NUCLEOTIDE SEQUENCE [LARGE SCALE MRNA]</scope>
    <source>
        <strain>Hereford</strain>
        <tissue>Ascending colon</tissue>
    </source>
</reference>
<keyword id="KW-0130">Cell adhesion</keyword>
<keyword id="KW-0965">Cell junction</keyword>
<keyword id="KW-1003">Cell membrane</keyword>
<keyword id="KW-0963">Cytoplasm</keyword>
<keyword id="KW-0472">Membrane</keyword>
<keyword id="KW-0488">Methylation</keyword>
<keyword id="KW-0539">Nucleus</keyword>
<keyword id="KW-0597">Phosphoprotein</keyword>
<keyword id="KW-1185">Reference proteome</keyword>
<keyword id="KW-0677">Repeat</keyword>
<keyword id="KW-0694">RNA-binding</keyword>
<dbReference type="EMBL" id="BC123626">
    <property type="protein sequence ID" value="AAI23627.1"/>
    <property type="molecule type" value="mRNA"/>
</dbReference>
<dbReference type="RefSeq" id="NP_001070326.1">
    <property type="nucleotide sequence ID" value="NM_001076858.1"/>
</dbReference>
<dbReference type="SMR" id="Q08DQ0"/>
<dbReference type="FunCoup" id="Q08DQ0">
    <property type="interactions" value="123"/>
</dbReference>
<dbReference type="STRING" id="9913.ENSBTAP00000073028"/>
<dbReference type="PaxDb" id="9913-ENSBTAP00000055960"/>
<dbReference type="PeptideAtlas" id="Q08DQ0"/>
<dbReference type="GeneID" id="516247"/>
<dbReference type="KEGG" id="bta:516247"/>
<dbReference type="CTD" id="11187"/>
<dbReference type="eggNOG" id="KOG1048">
    <property type="taxonomic scope" value="Eukaryota"/>
</dbReference>
<dbReference type="HOGENOM" id="CLU_009111_2_0_1"/>
<dbReference type="InParanoid" id="Q08DQ0"/>
<dbReference type="OrthoDB" id="3245100at2759"/>
<dbReference type="TreeFam" id="TF321877"/>
<dbReference type="Proteomes" id="UP000009136">
    <property type="component" value="Unplaced"/>
</dbReference>
<dbReference type="GO" id="GO:0005912">
    <property type="term" value="C:adherens junction"/>
    <property type="evidence" value="ECO:0000250"/>
    <property type="project" value="UniProtKB"/>
</dbReference>
<dbReference type="GO" id="GO:0005911">
    <property type="term" value="C:cell-cell junction"/>
    <property type="evidence" value="ECO:0000250"/>
    <property type="project" value="UniProtKB"/>
</dbReference>
<dbReference type="GO" id="GO:0005737">
    <property type="term" value="C:cytoplasm"/>
    <property type="evidence" value="ECO:0000250"/>
    <property type="project" value="UniProtKB"/>
</dbReference>
<dbReference type="GO" id="GO:0030057">
    <property type="term" value="C:desmosome"/>
    <property type="evidence" value="ECO:0000250"/>
    <property type="project" value="UniProtKB"/>
</dbReference>
<dbReference type="GO" id="GO:0005634">
    <property type="term" value="C:nucleus"/>
    <property type="evidence" value="ECO:0000250"/>
    <property type="project" value="UniProtKB"/>
</dbReference>
<dbReference type="GO" id="GO:0005886">
    <property type="term" value="C:plasma membrane"/>
    <property type="evidence" value="ECO:0000250"/>
    <property type="project" value="UniProtKB"/>
</dbReference>
<dbReference type="GO" id="GO:0045296">
    <property type="term" value="F:cadherin binding"/>
    <property type="evidence" value="ECO:0000318"/>
    <property type="project" value="GO_Central"/>
</dbReference>
<dbReference type="GO" id="GO:0003723">
    <property type="term" value="F:RNA binding"/>
    <property type="evidence" value="ECO:0007669"/>
    <property type="project" value="UniProtKB-KW"/>
</dbReference>
<dbReference type="GO" id="GO:0030036">
    <property type="term" value="P:actin cytoskeleton organization"/>
    <property type="evidence" value="ECO:0000250"/>
    <property type="project" value="UniProtKB"/>
</dbReference>
<dbReference type="GO" id="GO:0098609">
    <property type="term" value="P:cell-cell adhesion"/>
    <property type="evidence" value="ECO:0000318"/>
    <property type="project" value="GO_Central"/>
</dbReference>
<dbReference type="GO" id="GO:0002159">
    <property type="term" value="P:desmosome assembly"/>
    <property type="evidence" value="ECO:0000250"/>
    <property type="project" value="UniProtKB"/>
</dbReference>
<dbReference type="GO" id="GO:0002934">
    <property type="term" value="P:desmosome organization"/>
    <property type="evidence" value="ECO:0000250"/>
    <property type="project" value="UniProtKB"/>
</dbReference>
<dbReference type="GO" id="GO:0090136">
    <property type="term" value="P:epithelial cell-cell adhesion"/>
    <property type="evidence" value="ECO:0000250"/>
    <property type="project" value="UniProtKB"/>
</dbReference>
<dbReference type="GO" id="GO:0010669">
    <property type="term" value="P:epithelial structure maintenance"/>
    <property type="evidence" value="ECO:0000250"/>
    <property type="project" value="UniProtKB"/>
</dbReference>
<dbReference type="GO" id="GO:0045785">
    <property type="term" value="P:positive regulation of cell adhesion"/>
    <property type="evidence" value="ECO:0000250"/>
    <property type="project" value="UniProtKB"/>
</dbReference>
<dbReference type="GO" id="GO:1902808">
    <property type="term" value="P:positive regulation of cell cycle G1/S phase transition"/>
    <property type="evidence" value="ECO:0000250"/>
    <property type="project" value="UniProtKB"/>
</dbReference>
<dbReference type="GO" id="GO:0022409">
    <property type="term" value="P:positive regulation of cell-cell adhesion"/>
    <property type="evidence" value="ECO:0000250"/>
    <property type="project" value="UniProtKB"/>
</dbReference>
<dbReference type="GO" id="GO:1903829">
    <property type="term" value="P:positive regulation of protein localization"/>
    <property type="evidence" value="ECO:0000250"/>
    <property type="project" value="UniProtKB"/>
</dbReference>
<dbReference type="GO" id="GO:0002718">
    <property type="term" value="P:regulation of cytokine production involved in immune response"/>
    <property type="evidence" value="ECO:0000250"/>
    <property type="project" value="UniProtKB"/>
</dbReference>
<dbReference type="GO" id="GO:0051797">
    <property type="term" value="P:regulation of hair follicle development"/>
    <property type="evidence" value="ECO:0000250"/>
    <property type="project" value="UniProtKB"/>
</dbReference>
<dbReference type="FunFam" id="1.25.10.10:FF:000199">
    <property type="entry name" value="plakophilin-3"/>
    <property type="match status" value="1"/>
</dbReference>
<dbReference type="Gene3D" id="1.25.10.10">
    <property type="entry name" value="Leucine-rich Repeat Variant"/>
    <property type="match status" value="1"/>
</dbReference>
<dbReference type="InterPro" id="IPR011989">
    <property type="entry name" value="ARM-like"/>
</dbReference>
<dbReference type="InterPro" id="IPR016024">
    <property type="entry name" value="ARM-type_fold"/>
</dbReference>
<dbReference type="InterPro" id="IPR000225">
    <property type="entry name" value="Armadillo"/>
</dbReference>
<dbReference type="InterPro" id="IPR028435">
    <property type="entry name" value="Plakophilin/d_Catenin"/>
</dbReference>
<dbReference type="PANTHER" id="PTHR10372:SF1">
    <property type="entry name" value="PLAKOPHILIN-3"/>
    <property type="match status" value="1"/>
</dbReference>
<dbReference type="PANTHER" id="PTHR10372">
    <property type="entry name" value="PLAKOPHILLIN-RELATED"/>
    <property type="match status" value="1"/>
</dbReference>
<dbReference type="Pfam" id="PF00514">
    <property type="entry name" value="Arm"/>
    <property type="match status" value="2"/>
</dbReference>
<dbReference type="SMART" id="SM00185">
    <property type="entry name" value="ARM"/>
    <property type="match status" value="4"/>
</dbReference>
<dbReference type="SUPFAM" id="SSF48371">
    <property type="entry name" value="ARM repeat"/>
    <property type="match status" value="1"/>
</dbReference>
<dbReference type="PROSITE" id="PS50176">
    <property type="entry name" value="ARM_REPEAT"/>
    <property type="match status" value="1"/>
</dbReference>
<accession>Q08DQ0</accession>
<evidence type="ECO:0000250" key="1">
    <source>
        <dbReference type="UniProtKB" id="Q9QY23"/>
    </source>
</evidence>
<evidence type="ECO:0000250" key="2">
    <source>
        <dbReference type="UniProtKB" id="Q9Y446"/>
    </source>
</evidence>
<evidence type="ECO:0000256" key="3">
    <source>
        <dbReference type="SAM" id="MobiDB-lite"/>
    </source>
</evidence>
<evidence type="ECO:0000305" key="4"/>